<proteinExistence type="inferred from homology"/>
<comment type="similarity">
    <text evidence="1">Belongs to the SlyX family.</text>
</comment>
<keyword id="KW-1185">Reference proteome</keyword>
<feature type="chain" id="PRO_0000227069" description="Protein SlyX homolog">
    <location>
        <begin position="1"/>
        <end position="74"/>
    </location>
</feature>
<feature type="region of interest" description="Disordered" evidence="2">
    <location>
        <begin position="54"/>
        <end position="74"/>
    </location>
</feature>
<evidence type="ECO:0000255" key="1">
    <source>
        <dbReference type="HAMAP-Rule" id="MF_00715"/>
    </source>
</evidence>
<evidence type="ECO:0000256" key="2">
    <source>
        <dbReference type="SAM" id="MobiDB-lite"/>
    </source>
</evidence>
<sequence length="74" mass="8679">MDAVQELERRIVELEIQTALQEDVISGLNAMVAELRQTLDLQQAQLRLLYQKMQDRNPDAQEPYSLRDEIPPHY</sequence>
<reference key="1">
    <citation type="submission" date="2003-03" db="EMBL/GenBank/DDBJ databases">
        <title>The complete genome sequence of Neisseria gonorrhoeae.</title>
        <authorList>
            <person name="Lewis L.A."/>
            <person name="Gillaspy A.F."/>
            <person name="McLaughlin R.E."/>
            <person name="Gipson M."/>
            <person name="Ducey T.F."/>
            <person name="Ownbey T."/>
            <person name="Hartman K."/>
            <person name="Nydick C."/>
            <person name="Carson M.B."/>
            <person name="Vaughn J."/>
            <person name="Thomson C."/>
            <person name="Song L."/>
            <person name="Lin S."/>
            <person name="Yuan X."/>
            <person name="Najar F."/>
            <person name="Zhan M."/>
            <person name="Ren Q."/>
            <person name="Zhu H."/>
            <person name="Qi S."/>
            <person name="Kenton S.M."/>
            <person name="Lai H."/>
            <person name="White J.D."/>
            <person name="Clifton S."/>
            <person name="Roe B.A."/>
            <person name="Dyer D.W."/>
        </authorList>
    </citation>
    <scope>NUCLEOTIDE SEQUENCE [LARGE SCALE GENOMIC DNA]</scope>
    <source>
        <strain>ATCC 700825 / FA 1090</strain>
    </source>
</reference>
<gene>
    <name evidence="1" type="primary">slyX</name>
    <name type="ordered locus">NGO_2017</name>
</gene>
<dbReference type="EMBL" id="AE004969">
    <property type="protein sequence ID" value="AAW90625.1"/>
    <property type="molecule type" value="Genomic_DNA"/>
</dbReference>
<dbReference type="RefSeq" id="WP_003686929.1">
    <property type="nucleotide sequence ID" value="NC_002946.2"/>
</dbReference>
<dbReference type="RefSeq" id="YP_209037.1">
    <property type="nucleotide sequence ID" value="NC_002946.2"/>
</dbReference>
<dbReference type="SMR" id="Q5F5B2"/>
<dbReference type="STRING" id="242231.NGO_2017"/>
<dbReference type="KEGG" id="ngo:NGO_2017"/>
<dbReference type="PATRIC" id="fig|242231.10.peg.2432"/>
<dbReference type="HOGENOM" id="CLU_180796_3_1_4"/>
<dbReference type="Proteomes" id="UP000000535">
    <property type="component" value="Chromosome"/>
</dbReference>
<dbReference type="Gene3D" id="1.20.5.300">
    <property type="match status" value="1"/>
</dbReference>
<dbReference type="HAMAP" id="MF_00715">
    <property type="entry name" value="SlyX"/>
    <property type="match status" value="1"/>
</dbReference>
<dbReference type="InterPro" id="IPR007236">
    <property type="entry name" value="SlyX"/>
</dbReference>
<dbReference type="NCBIfam" id="NF003316">
    <property type="entry name" value="PRK04325.1"/>
    <property type="match status" value="1"/>
</dbReference>
<dbReference type="PANTHER" id="PTHR36508">
    <property type="entry name" value="PROTEIN SLYX"/>
    <property type="match status" value="1"/>
</dbReference>
<dbReference type="PANTHER" id="PTHR36508:SF1">
    <property type="entry name" value="PROTEIN SLYX"/>
    <property type="match status" value="1"/>
</dbReference>
<dbReference type="Pfam" id="PF04102">
    <property type="entry name" value="SlyX"/>
    <property type="match status" value="1"/>
</dbReference>
<protein>
    <recommendedName>
        <fullName evidence="1">Protein SlyX homolog</fullName>
    </recommendedName>
</protein>
<accession>Q5F5B2</accession>
<organism>
    <name type="scientific">Neisseria gonorrhoeae (strain ATCC 700825 / FA 1090)</name>
    <dbReference type="NCBI Taxonomy" id="242231"/>
    <lineage>
        <taxon>Bacteria</taxon>
        <taxon>Pseudomonadati</taxon>
        <taxon>Pseudomonadota</taxon>
        <taxon>Betaproteobacteria</taxon>
        <taxon>Neisseriales</taxon>
        <taxon>Neisseriaceae</taxon>
        <taxon>Neisseria</taxon>
    </lineage>
</organism>
<name>SLYX_NEIG1</name>